<keyword id="KW-0031">Aminopeptidase</keyword>
<keyword id="KW-0378">Hydrolase</keyword>
<keyword id="KW-0645">Protease</keyword>
<keyword id="KW-1185">Reference proteome</keyword>
<sequence length="293" mass="33663">MKITEGYMPFKGFKTYYRIVGENTEGKKPLVLLHGGPGSTHNYFEVLDKIAESGRQVIMYDQIGCGNSFVEGHPELFNADTWIEELIELRKHLGLDEIHLLGQSWGGMQAIWYAIEYKPKGIKSYILSSTLSSAKLWEKEQKRRISYMSEVDQKALLDAVNTGDYSSKEYNDALERFMEMYCAGEVTEDSPECLRRPKKSGSEAYIVGWGQNEFSPTGTLSGYEFTDRLHEIKEPCLVTSGAIDLCSPYIAKTMYDRIPNSKWELFEYSRHMPFVEENEKYIKVLTEWLNAND</sequence>
<comment type="function">
    <text evidence="2">Releases the N-terminal proline from various substrates.</text>
</comment>
<comment type="catalytic activity">
    <reaction evidence="2">
        <text>Release of N-terminal proline from a peptide.</text>
        <dbReference type="EC" id="3.4.11.5"/>
    </reaction>
</comment>
<comment type="similarity">
    <text evidence="4">Belongs to the peptidase S33 family.</text>
</comment>
<name>PIP_CLOD6</name>
<gene>
    <name evidence="2" type="primary">pip</name>
    <name evidence="5" type="synonym">pepI</name>
    <name type="ordered locus">CD630_30410</name>
</gene>
<evidence type="ECO:0000250" key="1">
    <source>
        <dbReference type="UniProtKB" id="O32449"/>
    </source>
</evidence>
<evidence type="ECO:0000250" key="2">
    <source>
        <dbReference type="UniProtKB" id="P46542"/>
    </source>
</evidence>
<evidence type="ECO:0000250" key="3">
    <source>
        <dbReference type="UniProtKB" id="P96084"/>
    </source>
</evidence>
<evidence type="ECO:0000255" key="4"/>
<evidence type="ECO:0000312" key="5">
    <source>
        <dbReference type="EMBL" id="CAJ69934.1"/>
    </source>
</evidence>
<accession>Q184M8</accession>
<reference evidence="5" key="1">
    <citation type="journal article" date="2006" name="Nat. Genet.">
        <title>The multidrug-resistant human pathogen Clostridium difficile has a highly mobile, mosaic genome.</title>
        <authorList>
            <person name="Sebaihia M."/>
            <person name="Wren B.W."/>
            <person name="Mullany P."/>
            <person name="Fairweather N.F."/>
            <person name="Minton N."/>
            <person name="Stabler R."/>
            <person name="Thomson N.R."/>
            <person name="Roberts A.P."/>
            <person name="Cerdeno-Tarraga A.M."/>
            <person name="Wang H."/>
            <person name="Holden M.T.G."/>
            <person name="Wright A."/>
            <person name="Churcher C."/>
            <person name="Quail M.A."/>
            <person name="Baker S."/>
            <person name="Bason N."/>
            <person name="Brooks K."/>
            <person name="Chillingworth T."/>
            <person name="Cronin A."/>
            <person name="Davis P."/>
            <person name="Dowd L."/>
            <person name="Fraser A."/>
            <person name="Feltwell T."/>
            <person name="Hance Z."/>
            <person name="Holroyd S."/>
            <person name="Jagels K."/>
            <person name="Moule S."/>
            <person name="Mungall K."/>
            <person name="Price C."/>
            <person name="Rabbinowitsch E."/>
            <person name="Sharp S."/>
            <person name="Simmonds M."/>
            <person name="Stevens K."/>
            <person name="Unwin L."/>
            <person name="Whithead S."/>
            <person name="Dupuy B."/>
            <person name="Dougan G."/>
            <person name="Barrell B."/>
            <person name="Parkhill J."/>
        </authorList>
    </citation>
    <scope>NUCLEOTIDE SEQUENCE [LARGE SCALE GENOMIC DNA]</scope>
    <source>
        <strain>630</strain>
    </source>
</reference>
<proteinExistence type="inferred from homology"/>
<dbReference type="EC" id="3.4.11.5"/>
<dbReference type="EMBL" id="AM180355">
    <property type="protein sequence ID" value="CAJ69934.1"/>
    <property type="molecule type" value="Genomic_DNA"/>
</dbReference>
<dbReference type="RefSeq" id="WP_003439900.1">
    <property type="nucleotide sequence ID" value="NZ_JAUPES010000008.1"/>
</dbReference>
<dbReference type="RefSeq" id="YP_001089556.1">
    <property type="nucleotide sequence ID" value="NC_009089.1"/>
</dbReference>
<dbReference type="SMR" id="Q184M8"/>
<dbReference type="STRING" id="272563.CD630_30410"/>
<dbReference type="ESTHER" id="pepd6-pip">
    <property type="family name" value="Proline_iminopeptidase"/>
</dbReference>
<dbReference type="MEROPS" id="S33.021"/>
<dbReference type="EnsemblBacteria" id="CAJ69934">
    <property type="protein sequence ID" value="CAJ69934"/>
    <property type="gene ID" value="CD630_30410"/>
</dbReference>
<dbReference type="GeneID" id="66355439"/>
<dbReference type="KEGG" id="cdf:CD630_30410"/>
<dbReference type="KEGG" id="pdc:CDIF630_03325"/>
<dbReference type="PATRIC" id="fig|272563.120.peg.3207"/>
<dbReference type="eggNOG" id="COG2267">
    <property type="taxonomic scope" value="Bacteria"/>
</dbReference>
<dbReference type="OrthoDB" id="9775557at2"/>
<dbReference type="PhylomeDB" id="Q184M8"/>
<dbReference type="BioCyc" id="PDIF272563:G12WB-3203-MONOMER"/>
<dbReference type="Proteomes" id="UP000001978">
    <property type="component" value="Chromosome"/>
</dbReference>
<dbReference type="GO" id="GO:0016020">
    <property type="term" value="C:membrane"/>
    <property type="evidence" value="ECO:0007669"/>
    <property type="project" value="TreeGrafter"/>
</dbReference>
<dbReference type="GO" id="GO:0004177">
    <property type="term" value="F:aminopeptidase activity"/>
    <property type="evidence" value="ECO:0007669"/>
    <property type="project" value="UniProtKB-KW"/>
</dbReference>
<dbReference type="GO" id="GO:0006508">
    <property type="term" value="P:proteolysis"/>
    <property type="evidence" value="ECO:0007669"/>
    <property type="project" value="UniProtKB-KW"/>
</dbReference>
<dbReference type="Gene3D" id="3.40.50.1820">
    <property type="entry name" value="alpha/beta hydrolase"/>
    <property type="match status" value="1"/>
</dbReference>
<dbReference type="InterPro" id="IPR000073">
    <property type="entry name" value="AB_hydrolase_1"/>
</dbReference>
<dbReference type="InterPro" id="IPR029058">
    <property type="entry name" value="AB_hydrolase_fold"/>
</dbReference>
<dbReference type="InterPro" id="IPR050266">
    <property type="entry name" value="AB_hydrolase_sf"/>
</dbReference>
<dbReference type="InterPro" id="IPR002410">
    <property type="entry name" value="Peptidase_S33"/>
</dbReference>
<dbReference type="InterPro" id="IPR005945">
    <property type="entry name" value="Pro_imino_pep"/>
</dbReference>
<dbReference type="NCBIfam" id="TIGR01250">
    <property type="entry name" value="pro_imino_pep_2"/>
    <property type="match status" value="1"/>
</dbReference>
<dbReference type="NCBIfam" id="NF045945">
    <property type="entry name" value="ProImpepLactob"/>
    <property type="match status" value="1"/>
</dbReference>
<dbReference type="PANTHER" id="PTHR43798:SF31">
    <property type="entry name" value="AB HYDROLASE SUPERFAMILY PROTEIN YCLE"/>
    <property type="match status" value="1"/>
</dbReference>
<dbReference type="PANTHER" id="PTHR43798">
    <property type="entry name" value="MONOACYLGLYCEROL LIPASE"/>
    <property type="match status" value="1"/>
</dbReference>
<dbReference type="Pfam" id="PF00561">
    <property type="entry name" value="Abhydrolase_1"/>
    <property type="match status" value="1"/>
</dbReference>
<dbReference type="PIRSF" id="PIRSF005539">
    <property type="entry name" value="Pept_S33_TRI_F1"/>
    <property type="match status" value="1"/>
</dbReference>
<dbReference type="PRINTS" id="PR00793">
    <property type="entry name" value="PROAMNOPTASE"/>
</dbReference>
<dbReference type="SUPFAM" id="SSF53474">
    <property type="entry name" value="alpha/beta-Hydrolases"/>
    <property type="match status" value="1"/>
</dbReference>
<feature type="chain" id="PRO_0000406318" description="Proline iminopeptidase">
    <location>
        <begin position="1"/>
        <end position="293"/>
    </location>
</feature>
<feature type="domain" description="AB hydrolase-1" evidence="4">
    <location>
        <begin position="28"/>
        <end position="277"/>
    </location>
</feature>
<feature type="active site" description="Nucleophile" evidence="3">
    <location>
        <position position="104"/>
    </location>
</feature>
<feature type="active site" evidence="1">
    <location>
        <position position="244"/>
    </location>
</feature>
<feature type="active site" description="Proton donor" evidence="3">
    <location>
        <position position="271"/>
    </location>
</feature>
<organism>
    <name type="scientific">Clostridioides difficile (strain 630)</name>
    <name type="common">Peptoclostridium difficile</name>
    <dbReference type="NCBI Taxonomy" id="272563"/>
    <lineage>
        <taxon>Bacteria</taxon>
        <taxon>Bacillati</taxon>
        <taxon>Bacillota</taxon>
        <taxon>Clostridia</taxon>
        <taxon>Peptostreptococcales</taxon>
        <taxon>Peptostreptococcaceae</taxon>
        <taxon>Clostridioides</taxon>
    </lineage>
</organism>
<protein>
    <recommendedName>
        <fullName evidence="5">Proline iminopeptidase</fullName>
        <shortName evidence="2">PIP</shortName>
        <ecNumber>3.4.11.5</ecNumber>
    </recommendedName>
    <alternativeName>
        <fullName evidence="2">Prolyl aminopeptidase</fullName>
        <shortName evidence="2">PAP</shortName>
    </alternativeName>
</protein>